<name>SYL_CUPMC</name>
<feature type="chain" id="PRO_1000009406" description="Leucine--tRNA ligase">
    <location>
        <begin position="1"/>
        <end position="873"/>
    </location>
</feature>
<feature type="short sequence motif" description="'HIGH' region">
    <location>
        <begin position="48"/>
        <end position="58"/>
    </location>
</feature>
<feature type="short sequence motif" description="'KMSKS' region">
    <location>
        <begin position="636"/>
        <end position="640"/>
    </location>
</feature>
<feature type="binding site" evidence="1">
    <location>
        <position position="639"/>
    </location>
    <ligand>
        <name>ATP</name>
        <dbReference type="ChEBI" id="CHEBI:30616"/>
    </ligand>
</feature>
<reference key="1">
    <citation type="journal article" date="2010" name="PLoS ONE">
        <title>The complete genome sequence of Cupriavidus metallidurans strain CH34, a master survivalist in harsh and anthropogenic environments.</title>
        <authorList>
            <person name="Janssen P.J."/>
            <person name="Van Houdt R."/>
            <person name="Moors H."/>
            <person name="Monsieurs P."/>
            <person name="Morin N."/>
            <person name="Michaux A."/>
            <person name="Benotmane M.A."/>
            <person name="Leys N."/>
            <person name="Vallaeys T."/>
            <person name="Lapidus A."/>
            <person name="Monchy S."/>
            <person name="Medigue C."/>
            <person name="Taghavi S."/>
            <person name="McCorkle S."/>
            <person name="Dunn J."/>
            <person name="van der Lelie D."/>
            <person name="Mergeay M."/>
        </authorList>
    </citation>
    <scope>NUCLEOTIDE SEQUENCE [LARGE SCALE GENOMIC DNA]</scope>
    <source>
        <strain>ATCC 43123 / DSM 2839 / NBRC 102507 / CH34</strain>
    </source>
</reference>
<comment type="catalytic activity">
    <reaction evidence="1">
        <text>tRNA(Leu) + L-leucine + ATP = L-leucyl-tRNA(Leu) + AMP + diphosphate</text>
        <dbReference type="Rhea" id="RHEA:11688"/>
        <dbReference type="Rhea" id="RHEA-COMP:9613"/>
        <dbReference type="Rhea" id="RHEA-COMP:9622"/>
        <dbReference type="ChEBI" id="CHEBI:30616"/>
        <dbReference type="ChEBI" id="CHEBI:33019"/>
        <dbReference type="ChEBI" id="CHEBI:57427"/>
        <dbReference type="ChEBI" id="CHEBI:78442"/>
        <dbReference type="ChEBI" id="CHEBI:78494"/>
        <dbReference type="ChEBI" id="CHEBI:456215"/>
        <dbReference type="EC" id="6.1.1.4"/>
    </reaction>
</comment>
<comment type="subcellular location">
    <subcellularLocation>
        <location evidence="1">Cytoplasm</location>
    </subcellularLocation>
</comment>
<comment type="similarity">
    <text evidence="1">Belongs to the class-I aminoacyl-tRNA synthetase family.</text>
</comment>
<keyword id="KW-0030">Aminoacyl-tRNA synthetase</keyword>
<keyword id="KW-0067">ATP-binding</keyword>
<keyword id="KW-0963">Cytoplasm</keyword>
<keyword id="KW-0436">Ligase</keyword>
<keyword id="KW-0547">Nucleotide-binding</keyword>
<keyword id="KW-0648">Protein biosynthesis</keyword>
<keyword id="KW-1185">Reference proteome</keyword>
<protein>
    <recommendedName>
        <fullName evidence="1">Leucine--tRNA ligase</fullName>
        <ecNumber evidence="1">6.1.1.4</ecNumber>
    </recommendedName>
    <alternativeName>
        <fullName evidence="1">Leucyl-tRNA synthetase</fullName>
        <shortName evidence="1">LeuRS</shortName>
    </alternativeName>
</protein>
<proteinExistence type="inferred from homology"/>
<evidence type="ECO:0000255" key="1">
    <source>
        <dbReference type="HAMAP-Rule" id="MF_00049"/>
    </source>
</evidence>
<gene>
    <name evidence="1" type="primary">leuS</name>
    <name type="ordered locus">Rmet_2973</name>
</gene>
<dbReference type="EC" id="6.1.1.4" evidence="1"/>
<dbReference type="EMBL" id="CP000352">
    <property type="protein sequence ID" value="ABF09846.1"/>
    <property type="molecule type" value="Genomic_DNA"/>
</dbReference>
<dbReference type="RefSeq" id="WP_011517508.1">
    <property type="nucleotide sequence ID" value="NC_007973.1"/>
</dbReference>
<dbReference type="SMR" id="Q1LJ30"/>
<dbReference type="STRING" id="266264.Rmet_2973"/>
<dbReference type="KEGG" id="rme:Rmet_2973"/>
<dbReference type="eggNOG" id="COG0495">
    <property type="taxonomic scope" value="Bacteria"/>
</dbReference>
<dbReference type="HOGENOM" id="CLU_004427_0_0_4"/>
<dbReference type="Proteomes" id="UP000002429">
    <property type="component" value="Chromosome"/>
</dbReference>
<dbReference type="GO" id="GO:0005829">
    <property type="term" value="C:cytosol"/>
    <property type="evidence" value="ECO:0007669"/>
    <property type="project" value="TreeGrafter"/>
</dbReference>
<dbReference type="GO" id="GO:0002161">
    <property type="term" value="F:aminoacyl-tRNA deacylase activity"/>
    <property type="evidence" value="ECO:0007669"/>
    <property type="project" value="InterPro"/>
</dbReference>
<dbReference type="GO" id="GO:0005524">
    <property type="term" value="F:ATP binding"/>
    <property type="evidence" value="ECO:0007669"/>
    <property type="project" value="UniProtKB-UniRule"/>
</dbReference>
<dbReference type="GO" id="GO:0004823">
    <property type="term" value="F:leucine-tRNA ligase activity"/>
    <property type="evidence" value="ECO:0007669"/>
    <property type="project" value="UniProtKB-UniRule"/>
</dbReference>
<dbReference type="GO" id="GO:0006429">
    <property type="term" value="P:leucyl-tRNA aminoacylation"/>
    <property type="evidence" value="ECO:0007669"/>
    <property type="project" value="UniProtKB-UniRule"/>
</dbReference>
<dbReference type="CDD" id="cd07958">
    <property type="entry name" value="Anticodon_Ia_Leu_BEm"/>
    <property type="match status" value="1"/>
</dbReference>
<dbReference type="CDD" id="cd00812">
    <property type="entry name" value="LeuRS_core"/>
    <property type="match status" value="1"/>
</dbReference>
<dbReference type="FunFam" id="1.10.730.10:FF:000003">
    <property type="entry name" value="Leucine--tRNA ligase"/>
    <property type="match status" value="1"/>
</dbReference>
<dbReference type="FunFam" id="2.20.28.290:FF:000001">
    <property type="entry name" value="Leucine--tRNA ligase"/>
    <property type="match status" value="1"/>
</dbReference>
<dbReference type="FunFam" id="3.40.50.620:FF:000003">
    <property type="entry name" value="Leucine--tRNA ligase"/>
    <property type="match status" value="1"/>
</dbReference>
<dbReference type="FunFam" id="3.40.50.620:FF:000056">
    <property type="entry name" value="Leucine--tRNA ligase"/>
    <property type="match status" value="1"/>
</dbReference>
<dbReference type="FunFam" id="3.90.740.10:FF:000012">
    <property type="entry name" value="Leucine--tRNA ligase"/>
    <property type="match status" value="1"/>
</dbReference>
<dbReference type="Gene3D" id="2.20.28.290">
    <property type="match status" value="1"/>
</dbReference>
<dbReference type="Gene3D" id="3.10.20.590">
    <property type="match status" value="1"/>
</dbReference>
<dbReference type="Gene3D" id="3.40.50.620">
    <property type="entry name" value="HUPs"/>
    <property type="match status" value="2"/>
</dbReference>
<dbReference type="Gene3D" id="1.10.730.10">
    <property type="entry name" value="Isoleucyl-tRNA Synthetase, Domain 1"/>
    <property type="match status" value="1"/>
</dbReference>
<dbReference type="Gene3D" id="3.90.740.10">
    <property type="entry name" value="Valyl/Leucyl/Isoleucyl-tRNA synthetase, editing domain"/>
    <property type="match status" value="1"/>
</dbReference>
<dbReference type="HAMAP" id="MF_00049_B">
    <property type="entry name" value="Leu_tRNA_synth_B"/>
    <property type="match status" value="1"/>
</dbReference>
<dbReference type="InterPro" id="IPR001412">
    <property type="entry name" value="aa-tRNA-synth_I_CS"/>
</dbReference>
<dbReference type="InterPro" id="IPR002300">
    <property type="entry name" value="aa-tRNA-synth_Ia"/>
</dbReference>
<dbReference type="InterPro" id="IPR002302">
    <property type="entry name" value="Leu-tRNA-ligase"/>
</dbReference>
<dbReference type="InterPro" id="IPR025709">
    <property type="entry name" value="Leu_tRNA-synth_edit"/>
</dbReference>
<dbReference type="InterPro" id="IPR013155">
    <property type="entry name" value="M/V/L/I-tRNA-synth_anticd-bd"/>
</dbReference>
<dbReference type="InterPro" id="IPR014729">
    <property type="entry name" value="Rossmann-like_a/b/a_fold"/>
</dbReference>
<dbReference type="InterPro" id="IPR009080">
    <property type="entry name" value="tRNAsynth_Ia_anticodon-bd"/>
</dbReference>
<dbReference type="InterPro" id="IPR009008">
    <property type="entry name" value="Val/Leu/Ile-tRNA-synth_edit"/>
</dbReference>
<dbReference type="NCBIfam" id="TIGR00396">
    <property type="entry name" value="leuS_bact"/>
    <property type="match status" value="1"/>
</dbReference>
<dbReference type="PANTHER" id="PTHR43740:SF2">
    <property type="entry name" value="LEUCINE--TRNA LIGASE, MITOCHONDRIAL"/>
    <property type="match status" value="1"/>
</dbReference>
<dbReference type="PANTHER" id="PTHR43740">
    <property type="entry name" value="LEUCYL-TRNA SYNTHETASE"/>
    <property type="match status" value="1"/>
</dbReference>
<dbReference type="Pfam" id="PF08264">
    <property type="entry name" value="Anticodon_1"/>
    <property type="match status" value="1"/>
</dbReference>
<dbReference type="Pfam" id="PF00133">
    <property type="entry name" value="tRNA-synt_1"/>
    <property type="match status" value="3"/>
</dbReference>
<dbReference type="Pfam" id="PF13603">
    <property type="entry name" value="tRNA-synt_1_2"/>
    <property type="match status" value="1"/>
</dbReference>
<dbReference type="PRINTS" id="PR00985">
    <property type="entry name" value="TRNASYNTHLEU"/>
</dbReference>
<dbReference type="SUPFAM" id="SSF47323">
    <property type="entry name" value="Anticodon-binding domain of a subclass of class I aminoacyl-tRNA synthetases"/>
    <property type="match status" value="1"/>
</dbReference>
<dbReference type="SUPFAM" id="SSF52374">
    <property type="entry name" value="Nucleotidylyl transferase"/>
    <property type="match status" value="1"/>
</dbReference>
<dbReference type="SUPFAM" id="SSF50677">
    <property type="entry name" value="ValRS/IleRS/LeuRS editing domain"/>
    <property type="match status" value="1"/>
</dbReference>
<dbReference type="PROSITE" id="PS00178">
    <property type="entry name" value="AA_TRNA_LIGASE_I"/>
    <property type="match status" value="1"/>
</dbReference>
<sequence>MQDKYLPSAVEQAAQQHWKAIDAYKVSEHAVGPDGKEKSKFYACSMLPYPSGKLHMGHVRNYTINDVMARYLRMNGRNVLMPMGWDAFGMPAENAALNNGVAPAAWTYDNIAYMKKQMQSMGLAIDWSREVATCSPEYYRWNQWLFLKMLEKGIAYRKTGTVNWDPVDQTVLANEQVIDGRGWRSGAVVEKREIPMYYLRITDYAQELLGDLEGLGWPERVKIMQQNWIGRSEGVRFAFPHEIKGADGKLINDGKLYVFTTRADTIMGVTFCAVAAEHPLATHAAESNPALAAFIEECKHGSVMEADMATMEKKGMPTGLKVTHPLTGEQVDVWVGNYVLMTYGDGAVMGVPAHDERDFAFALKYNLPIKQVIDVKGQAYSTDAWLEWYGDKEHGLCIHSGKYDGLGYKAAVDAIAADLAAKGLGEKKVTWRLRDWGISRQRYWGTPIPLIHCDSCGVVPVPEKDLPVVLPEDLVPDGTGNPLAKDPRFLECTCPSCGKPARRETDTMDTFIDSCWYYMRYTCPDAGTMVDARNDYWMPMDQYIGGIEHAILHLLYARFWTKVMRDMGLVKFDEPFTNLLTQGMVLNETFYREDASGKKTWYNPADVDVQTDERGRPAGATAKADGQPVVIGGIEKMSKSKNNGIDPQALIDQYGADTARLFVMFAAPPEQQLEWSGSGVEGASRFLRRVWNYGYANAQAIRDGAGTAPTADDAALRREIHTVLKQANYDYERIQYNTVVSATMKMLNALEDAKTASPAGRREGFSVLLRVLYPVVPHIAHGLWQELGYAAETVDILDAAWPQVDEAALVRSEIELVLQVNGKVRGSLTVPADADRAAIEATAAASEIVAKFAAGAAPKKIVVVPGRLVNVVL</sequence>
<organism>
    <name type="scientific">Cupriavidus metallidurans (strain ATCC 43123 / DSM 2839 / NBRC 102507 / CH34)</name>
    <name type="common">Ralstonia metallidurans</name>
    <dbReference type="NCBI Taxonomy" id="266264"/>
    <lineage>
        <taxon>Bacteria</taxon>
        <taxon>Pseudomonadati</taxon>
        <taxon>Pseudomonadota</taxon>
        <taxon>Betaproteobacteria</taxon>
        <taxon>Burkholderiales</taxon>
        <taxon>Burkholderiaceae</taxon>
        <taxon>Cupriavidus</taxon>
    </lineage>
</organism>
<accession>Q1LJ30</accession>